<gene>
    <name evidence="1" type="primary">phnW</name>
    <name type="ordered locus">BURPS668_A0582</name>
</gene>
<feature type="chain" id="PRO_1000068247" description="2-aminoethylphosphonate--pyruvate transaminase">
    <location>
        <begin position="1"/>
        <end position="369"/>
    </location>
</feature>
<feature type="modified residue" description="N6-(pyridoxal phosphate)lysine" evidence="1">
    <location>
        <position position="193"/>
    </location>
</feature>
<keyword id="KW-0032">Aminotransferase</keyword>
<keyword id="KW-0663">Pyridoxal phosphate</keyword>
<keyword id="KW-0670">Pyruvate</keyword>
<keyword id="KW-0808">Transferase</keyword>
<accession>A3NGW6</accession>
<name>PHNW_BURP6</name>
<sequence>MPERDPILLTPGPLTTSRMTRDAMLRDWGSWDAAFNRLTKSVCADLVRIAGGGDAYVCVPLQGSGTFAVEATLGTLVPRDARVLVPNNGAYCARIAAILRRLGVAHVELPFAEDEPASAHAIDAALARDARLTHVALVHLETSAGLLNPLDDIAAVCRARGKALIVDAMSSFGALPIALAASGIDALISASGKCLEGVPGMGFAIVRRSALEAAEGRSPSVALDLHDQYAYMQRTSQWRFTPPTHVLAALRAALDQFFDEGGQPARGARYARNCATLVDGMRALGFEPFLDARAQASVIVTFYAPADPAYAFPAFYAAVRDAGYVLYPGKLTTADTFRVGCIGALGADEMRGAVAAIGGALESLGIAMR</sequence>
<protein>
    <recommendedName>
        <fullName evidence="1">2-aminoethylphosphonate--pyruvate transaminase</fullName>
        <ecNumber evidence="1">2.6.1.37</ecNumber>
    </recommendedName>
    <alternativeName>
        <fullName evidence="1">2-aminoethylphosphonate aminotransferase</fullName>
    </alternativeName>
    <alternativeName>
        <fullName evidence="1">AEP transaminase</fullName>
        <shortName evidence="1">AEPT</shortName>
    </alternativeName>
</protein>
<organism>
    <name type="scientific">Burkholderia pseudomallei (strain 668)</name>
    <dbReference type="NCBI Taxonomy" id="320373"/>
    <lineage>
        <taxon>Bacteria</taxon>
        <taxon>Pseudomonadati</taxon>
        <taxon>Pseudomonadota</taxon>
        <taxon>Betaproteobacteria</taxon>
        <taxon>Burkholderiales</taxon>
        <taxon>Burkholderiaceae</taxon>
        <taxon>Burkholderia</taxon>
        <taxon>pseudomallei group</taxon>
    </lineage>
</organism>
<comment type="function">
    <text evidence="1">Involved in phosphonate degradation.</text>
</comment>
<comment type="catalytic activity">
    <reaction evidence="1">
        <text>(2-aminoethyl)phosphonate + pyruvate = phosphonoacetaldehyde + L-alanine</text>
        <dbReference type="Rhea" id="RHEA:17021"/>
        <dbReference type="ChEBI" id="CHEBI:15361"/>
        <dbReference type="ChEBI" id="CHEBI:57418"/>
        <dbReference type="ChEBI" id="CHEBI:57972"/>
        <dbReference type="ChEBI" id="CHEBI:58383"/>
        <dbReference type="EC" id="2.6.1.37"/>
    </reaction>
</comment>
<comment type="cofactor">
    <cofactor evidence="1">
        <name>pyridoxal 5'-phosphate</name>
        <dbReference type="ChEBI" id="CHEBI:597326"/>
    </cofactor>
</comment>
<comment type="subunit">
    <text evidence="1">Homodimer.</text>
</comment>
<comment type="similarity">
    <text evidence="1">Belongs to the class-V pyridoxal-phosphate-dependent aminotransferase family. PhnW subfamily.</text>
</comment>
<dbReference type="EC" id="2.6.1.37" evidence="1"/>
<dbReference type="EMBL" id="CP000571">
    <property type="protein sequence ID" value="ABN87994.1"/>
    <property type="molecule type" value="Genomic_DNA"/>
</dbReference>
<dbReference type="RefSeq" id="WP_009971417.1">
    <property type="nucleotide sequence ID" value="NC_009075.1"/>
</dbReference>
<dbReference type="SMR" id="A3NGW6"/>
<dbReference type="KEGG" id="bpd:BURPS668_A0582"/>
<dbReference type="HOGENOM" id="CLU_027686_3_1_4"/>
<dbReference type="GO" id="GO:0047304">
    <property type="term" value="F:2-aminoethylphosphonate-pyruvate transaminase activity"/>
    <property type="evidence" value="ECO:0007669"/>
    <property type="project" value="UniProtKB-UniRule"/>
</dbReference>
<dbReference type="GO" id="GO:0019700">
    <property type="term" value="P:organic phosphonate catabolic process"/>
    <property type="evidence" value="ECO:0007669"/>
    <property type="project" value="InterPro"/>
</dbReference>
<dbReference type="Gene3D" id="3.90.1150.10">
    <property type="entry name" value="Aspartate Aminotransferase, domain 1"/>
    <property type="match status" value="1"/>
</dbReference>
<dbReference type="Gene3D" id="3.40.640.10">
    <property type="entry name" value="Type I PLP-dependent aspartate aminotransferase-like (Major domain)"/>
    <property type="match status" value="1"/>
</dbReference>
<dbReference type="HAMAP" id="MF_01376">
    <property type="entry name" value="PhnW_aminotrans_5"/>
    <property type="match status" value="1"/>
</dbReference>
<dbReference type="InterPro" id="IPR000192">
    <property type="entry name" value="Aminotrans_V_dom"/>
</dbReference>
<dbReference type="InterPro" id="IPR012703">
    <property type="entry name" value="NH2EtPonate_pyrv_transaminase"/>
</dbReference>
<dbReference type="InterPro" id="IPR015424">
    <property type="entry name" value="PyrdxlP-dep_Trfase"/>
</dbReference>
<dbReference type="InterPro" id="IPR015421">
    <property type="entry name" value="PyrdxlP-dep_Trfase_major"/>
</dbReference>
<dbReference type="InterPro" id="IPR015422">
    <property type="entry name" value="PyrdxlP-dep_Trfase_small"/>
</dbReference>
<dbReference type="InterPro" id="IPR024169">
    <property type="entry name" value="SP_NH2Trfase/AEP_transaminase"/>
</dbReference>
<dbReference type="NCBIfam" id="TIGR03301">
    <property type="entry name" value="PhnW-AepZ"/>
    <property type="match status" value="1"/>
</dbReference>
<dbReference type="NCBIfam" id="NF010006">
    <property type="entry name" value="PRK13479.1"/>
    <property type="match status" value="1"/>
</dbReference>
<dbReference type="NCBIfam" id="TIGR02326">
    <property type="entry name" value="transamin_PhnW"/>
    <property type="match status" value="1"/>
</dbReference>
<dbReference type="PANTHER" id="PTHR42778">
    <property type="entry name" value="2-AMINOETHYLPHOSPHONATE--PYRUVATE TRANSAMINASE"/>
    <property type="match status" value="1"/>
</dbReference>
<dbReference type="PANTHER" id="PTHR42778:SF1">
    <property type="entry name" value="2-AMINOETHYLPHOSPHONATE--PYRUVATE TRANSAMINASE"/>
    <property type="match status" value="1"/>
</dbReference>
<dbReference type="Pfam" id="PF00266">
    <property type="entry name" value="Aminotran_5"/>
    <property type="match status" value="1"/>
</dbReference>
<dbReference type="PIRSF" id="PIRSF000524">
    <property type="entry name" value="SPT"/>
    <property type="match status" value="1"/>
</dbReference>
<dbReference type="SUPFAM" id="SSF53383">
    <property type="entry name" value="PLP-dependent transferases"/>
    <property type="match status" value="1"/>
</dbReference>
<evidence type="ECO:0000255" key="1">
    <source>
        <dbReference type="HAMAP-Rule" id="MF_01376"/>
    </source>
</evidence>
<proteinExistence type="inferred from homology"/>
<reference key="1">
    <citation type="journal article" date="2010" name="Genome Biol. Evol.">
        <title>Continuing evolution of Burkholderia mallei through genome reduction and large-scale rearrangements.</title>
        <authorList>
            <person name="Losada L."/>
            <person name="Ronning C.M."/>
            <person name="DeShazer D."/>
            <person name="Woods D."/>
            <person name="Fedorova N."/>
            <person name="Kim H.S."/>
            <person name="Shabalina S.A."/>
            <person name="Pearson T.R."/>
            <person name="Brinkac L."/>
            <person name="Tan P."/>
            <person name="Nandi T."/>
            <person name="Crabtree J."/>
            <person name="Badger J."/>
            <person name="Beckstrom-Sternberg S."/>
            <person name="Saqib M."/>
            <person name="Schutzer S.E."/>
            <person name="Keim P."/>
            <person name="Nierman W.C."/>
        </authorList>
    </citation>
    <scope>NUCLEOTIDE SEQUENCE [LARGE SCALE GENOMIC DNA]</scope>
    <source>
        <strain>668</strain>
    </source>
</reference>